<proteinExistence type="evidence at protein level"/>
<protein>
    <recommendedName>
        <fullName>Nucleoside diphosphate kinase 1</fullName>
        <ecNumber>2.7.4.6</ecNumber>
    </recommendedName>
    <alternativeName>
        <fullName>Nucleoside diphosphate kinase I</fullName>
        <shortName>NDK I</shortName>
        <shortName>NDP kinase I</shortName>
        <shortName>NDPK I</shortName>
    </alternativeName>
</protein>
<feature type="chain" id="PRO_0000137141" description="Nucleoside diphosphate kinase 1">
    <location>
        <begin position="1"/>
        <end position="149"/>
    </location>
</feature>
<feature type="active site" description="Pros-phosphohistidine intermediate" evidence="1">
    <location>
        <position position="115"/>
    </location>
</feature>
<feature type="binding site" evidence="1">
    <location>
        <position position="9"/>
    </location>
    <ligand>
        <name>ATP</name>
        <dbReference type="ChEBI" id="CHEBI:30616"/>
    </ligand>
</feature>
<feature type="binding site" evidence="1">
    <location>
        <position position="57"/>
    </location>
    <ligand>
        <name>ATP</name>
        <dbReference type="ChEBI" id="CHEBI:30616"/>
    </ligand>
</feature>
<feature type="binding site" evidence="1">
    <location>
        <position position="85"/>
    </location>
    <ligand>
        <name>ATP</name>
        <dbReference type="ChEBI" id="CHEBI:30616"/>
    </ligand>
</feature>
<feature type="binding site" evidence="1">
    <location>
        <position position="91"/>
    </location>
    <ligand>
        <name>ATP</name>
        <dbReference type="ChEBI" id="CHEBI:30616"/>
    </ligand>
</feature>
<feature type="binding site" evidence="1">
    <location>
        <position position="102"/>
    </location>
    <ligand>
        <name>ATP</name>
        <dbReference type="ChEBI" id="CHEBI:30616"/>
    </ligand>
</feature>
<feature type="binding site" evidence="1">
    <location>
        <position position="112"/>
    </location>
    <ligand>
        <name>ATP</name>
        <dbReference type="ChEBI" id="CHEBI:30616"/>
    </ligand>
</feature>
<feature type="sequence conflict" description="In Ref. 2; AAT70416." evidence="4" ref="2">
    <original>Y</original>
    <variation>F</variation>
    <location>
        <position position="31"/>
    </location>
</feature>
<feature type="strand" evidence="5">
    <location>
        <begin position="3"/>
        <end position="8"/>
    </location>
</feature>
<feature type="helix" evidence="5">
    <location>
        <begin position="10"/>
        <end position="14"/>
    </location>
</feature>
<feature type="helix" evidence="5">
    <location>
        <begin position="18"/>
        <end position="28"/>
    </location>
</feature>
<feature type="strand" evidence="5">
    <location>
        <begin position="31"/>
        <end position="38"/>
    </location>
</feature>
<feature type="helix" evidence="5">
    <location>
        <begin position="42"/>
        <end position="48"/>
    </location>
</feature>
<feature type="helix" evidence="5">
    <location>
        <begin position="50"/>
        <end position="52"/>
    </location>
</feature>
<feature type="helix" evidence="5">
    <location>
        <begin position="58"/>
        <end position="66"/>
    </location>
</feature>
<feature type="strand" evidence="5">
    <location>
        <begin position="70"/>
        <end position="77"/>
    </location>
</feature>
<feature type="helix" evidence="5">
    <location>
        <begin position="80"/>
        <end position="88"/>
    </location>
</feature>
<feature type="helix" evidence="5">
    <location>
        <begin position="93"/>
        <end position="95"/>
    </location>
</feature>
<feature type="helix" evidence="5">
    <location>
        <begin position="101"/>
        <end position="105"/>
    </location>
</feature>
<feature type="strand" evidence="5">
    <location>
        <begin position="113"/>
        <end position="116"/>
    </location>
</feature>
<feature type="helix" evidence="5">
    <location>
        <begin position="120"/>
        <end position="130"/>
    </location>
</feature>
<feature type="helix" evidence="5">
    <location>
        <begin position="143"/>
        <end position="146"/>
    </location>
</feature>
<organism>
    <name type="scientific">Oryza sativa subsp. japonica</name>
    <name type="common">Rice</name>
    <dbReference type="NCBI Taxonomy" id="39947"/>
    <lineage>
        <taxon>Eukaryota</taxon>
        <taxon>Viridiplantae</taxon>
        <taxon>Streptophyta</taxon>
        <taxon>Embryophyta</taxon>
        <taxon>Tracheophyta</taxon>
        <taxon>Spermatophyta</taxon>
        <taxon>Magnoliopsida</taxon>
        <taxon>Liliopsida</taxon>
        <taxon>Poales</taxon>
        <taxon>Poaceae</taxon>
        <taxon>BOP clade</taxon>
        <taxon>Oryzoideae</taxon>
        <taxon>Oryzeae</taxon>
        <taxon>Oryzinae</taxon>
        <taxon>Oryza</taxon>
        <taxon>Oryza sativa</taxon>
    </lineage>
</organism>
<reference key="1">
    <citation type="journal article" date="1993" name="Plant Mol. Biol.">
        <title>Molecular cloning and nucleotide sequence cDNA encoding nucleoside diphosphate kinase of rice (Oryza sativa L.).</title>
        <authorList>
            <person name="Yano A."/>
            <person name="Shimaaki T."/>
            <person name="Kato A."/>
            <person name="Umeda M."/>
            <person name="Uchimiya H."/>
        </authorList>
    </citation>
    <scope>NUCLEOTIDE SEQUENCE [MRNA]</scope>
</reference>
<reference key="2">
    <citation type="journal article" date="2004" name="Mol. Cells">
        <title>Enhanced expression of a gene encoding a nucleoside diphosphate kinase 1 (OsNDPK1) in rice plants upon infection with bacterial pathogens.</title>
        <authorList>
            <person name="Cho S.M."/>
            <person name="Shin S.H."/>
            <person name="Kim K.S."/>
            <person name="Kim Y.C."/>
            <person name="Eun M.Y."/>
            <person name="Cho B.H."/>
        </authorList>
    </citation>
    <scope>NUCLEOTIDE SEQUENCE [MRNA]</scope>
    <scope>INDUCTION</scope>
    <source>
        <strain>cv. Dongjin</strain>
        <tissue>Leaf</tissue>
    </source>
</reference>
<reference key="3">
    <citation type="journal article" date="2005" name="Nature">
        <title>The map-based sequence of the rice genome.</title>
        <authorList>
            <consortium name="International rice genome sequencing project (IRGSP)"/>
        </authorList>
    </citation>
    <scope>NUCLEOTIDE SEQUENCE [LARGE SCALE GENOMIC DNA]</scope>
    <source>
        <strain>cv. Nipponbare</strain>
    </source>
</reference>
<reference key="4">
    <citation type="journal article" date="2008" name="Nucleic Acids Res.">
        <title>The rice annotation project database (RAP-DB): 2008 update.</title>
        <authorList>
            <consortium name="The rice annotation project (RAP)"/>
        </authorList>
    </citation>
    <scope>GENOME REANNOTATION</scope>
    <source>
        <strain>cv. Nipponbare</strain>
    </source>
</reference>
<reference key="5">
    <citation type="journal article" date="2013" name="Rice">
        <title>Improvement of the Oryza sativa Nipponbare reference genome using next generation sequence and optical map data.</title>
        <authorList>
            <person name="Kawahara Y."/>
            <person name="de la Bastide M."/>
            <person name="Hamilton J.P."/>
            <person name="Kanamori H."/>
            <person name="McCombie W.R."/>
            <person name="Ouyang S."/>
            <person name="Schwartz D.C."/>
            <person name="Tanaka T."/>
            <person name="Wu J."/>
            <person name="Zhou S."/>
            <person name="Childs K.L."/>
            <person name="Davidson R.M."/>
            <person name="Lin H."/>
            <person name="Quesada-Ocampo L."/>
            <person name="Vaillancourt B."/>
            <person name="Sakai H."/>
            <person name="Lee S.S."/>
            <person name="Kim J."/>
            <person name="Numa H."/>
            <person name="Itoh T."/>
            <person name="Buell C.R."/>
            <person name="Matsumoto T."/>
        </authorList>
    </citation>
    <scope>GENOME REANNOTATION</scope>
    <source>
        <strain>cv. Nipponbare</strain>
    </source>
</reference>
<reference key="6">
    <citation type="journal article" date="2005" name="PLoS Biol.">
        <title>The genomes of Oryza sativa: a history of duplications.</title>
        <authorList>
            <person name="Yu J."/>
            <person name="Wang J."/>
            <person name="Lin W."/>
            <person name="Li S."/>
            <person name="Li H."/>
            <person name="Zhou J."/>
            <person name="Ni P."/>
            <person name="Dong W."/>
            <person name="Hu S."/>
            <person name="Zeng C."/>
            <person name="Zhang J."/>
            <person name="Zhang Y."/>
            <person name="Li R."/>
            <person name="Xu Z."/>
            <person name="Li S."/>
            <person name="Li X."/>
            <person name="Zheng H."/>
            <person name="Cong L."/>
            <person name="Lin L."/>
            <person name="Yin J."/>
            <person name="Geng J."/>
            <person name="Li G."/>
            <person name="Shi J."/>
            <person name="Liu J."/>
            <person name="Lv H."/>
            <person name="Li J."/>
            <person name="Wang J."/>
            <person name="Deng Y."/>
            <person name="Ran L."/>
            <person name="Shi X."/>
            <person name="Wang X."/>
            <person name="Wu Q."/>
            <person name="Li C."/>
            <person name="Ren X."/>
            <person name="Wang J."/>
            <person name="Wang X."/>
            <person name="Li D."/>
            <person name="Liu D."/>
            <person name="Zhang X."/>
            <person name="Ji Z."/>
            <person name="Zhao W."/>
            <person name="Sun Y."/>
            <person name="Zhang Z."/>
            <person name="Bao J."/>
            <person name="Han Y."/>
            <person name="Dong L."/>
            <person name="Ji J."/>
            <person name="Chen P."/>
            <person name="Wu S."/>
            <person name="Liu J."/>
            <person name="Xiao Y."/>
            <person name="Bu D."/>
            <person name="Tan J."/>
            <person name="Yang L."/>
            <person name="Ye C."/>
            <person name="Zhang J."/>
            <person name="Xu J."/>
            <person name="Zhou Y."/>
            <person name="Yu Y."/>
            <person name="Zhang B."/>
            <person name="Zhuang S."/>
            <person name="Wei H."/>
            <person name="Liu B."/>
            <person name="Lei M."/>
            <person name="Yu H."/>
            <person name="Li Y."/>
            <person name="Xu H."/>
            <person name="Wei S."/>
            <person name="He X."/>
            <person name="Fang L."/>
            <person name="Zhang Z."/>
            <person name="Zhang Y."/>
            <person name="Huang X."/>
            <person name="Su Z."/>
            <person name="Tong W."/>
            <person name="Li J."/>
            <person name="Tong Z."/>
            <person name="Li S."/>
            <person name="Ye J."/>
            <person name="Wang L."/>
            <person name="Fang L."/>
            <person name="Lei T."/>
            <person name="Chen C.-S."/>
            <person name="Chen H.-C."/>
            <person name="Xu Z."/>
            <person name="Li H."/>
            <person name="Huang H."/>
            <person name="Zhang F."/>
            <person name="Xu H."/>
            <person name="Li N."/>
            <person name="Zhao C."/>
            <person name="Li S."/>
            <person name="Dong L."/>
            <person name="Huang Y."/>
            <person name="Li L."/>
            <person name="Xi Y."/>
            <person name="Qi Q."/>
            <person name="Li W."/>
            <person name="Zhang B."/>
            <person name="Hu W."/>
            <person name="Zhang Y."/>
            <person name="Tian X."/>
            <person name="Jiao Y."/>
            <person name="Liang X."/>
            <person name="Jin J."/>
            <person name="Gao L."/>
            <person name="Zheng W."/>
            <person name="Hao B."/>
            <person name="Liu S.-M."/>
            <person name="Wang W."/>
            <person name="Yuan L."/>
            <person name="Cao M."/>
            <person name="McDermott J."/>
            <person name="Samudrala R."/>
            <person name="Wang J."/>
            <person name="Wong G.K.-S."/>
            <person name="Yang H."/>
        </authorList>
    </citation>
    <scope>NUCLEOTIDE SEQUENCE [LARGE SCALE GENOMIC DNA]</scope>
    <source>
        <strain>cv. Nipponbare</strain>
    </source>
</reference>
<reference key="7">
    <citation type="journal article" date="2005" name="J. Struct. Biol.">
        <title>Crystal structure of nucleoside diphosphate kinase required for coleoptile elongation in rice (Oryza sativa L.).</title>
        <authorList>
            <person name="Huang J.-Y."/>
            <person name="Chang T."/>
            <person name="Chang C.-Y."/>
            <person name="Chen C.-J."/>
        </authorList>
    </citation>
    <scope>X-RAY CRYSTALLOGRAPHY (2.5 ANGSTROMS)</scope>
    <scope>SUBUNIT</scope>
</reference>
<gene>
    <name type="primary">NDKR</name>
    <name type="ordered locus">Os07g0492000</name>
    <name type="ordered locus">LOC_Os07g30970</name>
    <name type="ORF">OJ1218_C12.24</name>
    <name type="ORF">OsJ_023347</name>
    <name type="ORF">P0038F10.104</name>
</gene>
<dbReference type="EC" id="2.7.4.6"/>
<dbReference type="EMBL" id="D16292">
    <property type="protein sequence ID" value="BAA03798.1"/>
    <property type="molecule type" value="mRNA"/>
</dbReference>
<dbReference type="EMBL" id="AY649743">
    <property type="protein sequence ID" value="AAT70416.1"/>
    <property type="molecule type" value="mRNA"/>
</dbReference>
<dbReference type="EMBL" id="AP004051">
    <property type="protein sequence ID" value="BAC83301.1"/>
    <property type="molecule type" value="Genomic_DNA"/>
</dbReference>
<dbReference type="EMBL" id="AP004266">
    <property type="protein sequence ID" value="BAD30551.1"/>
    <property type="molecule type" value="Genomic_DNA"/>
</dbReference>
<dbReference type="EMBL" id="AP008213">
    <property type="protein sequence ID" value="BAF21596.1"/>
    <property type="molecule type" value="Genomic_DNA"/>
</dbReference>
<dbReference type="EMBL" id="AP014963">
    <property type="protein sequence ID" value="BAT01561.1"/>
    <property type="molecule type" value="Genomic_DNA"/>
</dbReference>
<dbReference type="EMBL" id="CM000144">
    <property type="protein sequence ID" value="EAZ39864.1"/>
    <property type="molecule type" value="Genomic_DNA"/>
</dbReference>
<dbReference type="PIR" id="S43330">
    <property type="entry name" value="S43330"/>
</dbReference>
<dbReference type="RefSeq" id="XP_015647142.1">
    <property type="nucleotide sequence ID" value="XM_015791656.1"/>
</dbReference>
<dbReference type="PDB" id="1PKU">
    <property type="method" value="X-ray"/>
    <property type="resolution" value="2.50 A"/>
    <property type="chains" value="A/B/C/D/E/F/G/H/I/J/K/L=1-149"/>
</dbReference>
<dbReference type="PDBsum" id="1PKU"/>
<dbReference type="SMR" id="Q07661"/>
<dbReference type="FunCoup" id="Q07661">
    <property type="interactions" value="1028"/>
</dbReference>
<dbReference type="STRING" id="39947.Q07661"/>
<dbReference type="PaxDb" id="39947-Q07661"/>
<dbReference type="EnsemblPlants" id="Os07t0492000-01">
    <property type="protein sequence ID" value="Os07t0492000-01"/>
    <property type="gene ID" value="Os07g0492000"/>
</dbReference>
<dbReference type="Gramene" id="Os07t0492000-01">
    <property type="protein sequence ID" value="Os07t0492000-01"/>
    <property type="gene ID" value="Os07g0492000"/>
</dbReference>
<dbReference type="KEGG" id="dosa:Os07g0492000"/>
<dbReference type="eggNOG" id="KOG0888">
    <property type="taxonomic scope" value="Eukaryota"/>
</dbReference>
<dbReference type="HOGENOM" id="CLU_060216_6_3_1"/>
<dbReference type="InParanoid" id="Q07661"/>
<dbReference type="OMA" id="NIWFKAD"/>
<dbReference type="OrthoDB" id="2162449at2759"/>
<dbReference type="BRENDA" id="2.7.4.6">
    <property type="organism ID" value="4460"/>
</dbReference>
<dbReference type="EvolutionaryTrace" id="Q07661"/>
<dbReference type="Proteomes" id="UP000000763">
    <property type="component" value="Chromosome 7"/>
</dbReference>
<dbReference type="Proteomes" id="UP000007752">
    <property type="component" value="Chromosome 7"/>
</dbReference>
<dbReference type="Proteomes" id="UP000059680">
    <property type="component" value="Chromosome 7"/>
</dbReference>
<dbReference type="GO" id="GO:0005524">
    <property type="term" value="F:ATP binding"/>
    <property type="evidence" value="ECO:0007669"/>
    <property type="project" value="UniProtKB-KW"/>
</dbReference>
<dbReference type="GO" id="GO:0046872">
    <property type="term" value="F:metal ion binding"/>
    <property type="evidence" value="ECO:0007669"/>
    <property type="project" value="UniProtKB-KW"/>
</dbReference>
<dbReference type="GO" id="GO:0004550">
    <property type="term" value="F:nucleoside diphosphate kinase activity"/>
    <property type="evidence" value="ECO:0007669"/>
    <property type="project" value="UniProtKB-EC"/>
</dbReference>
<dbReference type="GO" id="GO:0006241">
    <property type="term" value="P:CTP biosynthetic process"/>
    <property type="evidence" value="ECO:0007669"/>
    <property type="project" value="InterPro"/>
</dbReference>
<dbReference type="GO" id="GO:0006183">
    <property type="term" value="P:GTP biosynthetic process"/>
    <property type="evidence" value="ECO:0007669"/>
    <property type="project" value="InterPro"/>
</dbReference>
<dbReference type="GO" id="GO:0006228">
    <property type="term" value="P:UTP biosynthetic process"/>
    <property type="evidence" value="ECO:0007669"/>
    <property type="project" value="InterPro"/>
</dbReference>
<dbReference type="CDD" id="cd04413">
    <property type="entry name" value="NDPk_I"/>
    <property type="match status" value="1"/>
</dbReference>
<dbReference type="FunFam" id="3.30.70.141:FF:000002">
    <property type="entry name" value="Nucleoside diphosphate kinase"/>
    <property type="match status" value="1"/>
</dbReference>
<dbReference type="Gene3D" id="3.30.70.141">
    <property type="entry name" value="Nucleoside diphosphate kinase-like domain"/>
    <property type="match status" value="1"/>
</dbReference>
<dbReference type="HAMAP" id="MF_00451">
    <property type="entry name" value="NDP_kinase"/>
    <property type="match status" value="1"/>
</dbReference>
<dbReference type="InterPro" id="IPR034907">
    <property type="entry name" value="NDK-like_dom"/>
</dbReference>
<dbReference type="InterPro" id="IPR036850">
    <property type="entry name" value="NDK-like_dom_sf"/>
</dbReference>
<dbReference type="InterPro" id="IPR001564">
    <property type="entry name" value="Nucleoside_diP_kinase"/>
</dbReference>
<dbReference type="InterPro" id="IPR023005">
    <property type="entry name" value="Nucleoside_diP_kinase_AS"/>
</dbReference>
<dbReference type="NCBIfam" id="NF001908">
    <property type="entry name" value="PRK00668.1"/>
    <property type="match status" value="1"/>
</dbReference>
<dbReference type="PANTHER" id="PTHR11349">
    <property type="entry name" value="NUCLEOSIDE DIPHOSPHATE KINASE"/>
    <property type="match status" value="1"/>
</dbReference>
<dbReference type="Pfam" id="PF00334">
    <property type="entry name" value="NDK"/>
    <property type="match status" value="1"/>
</dbReference>
<dbReference type="PRINTS" id="PR01243">
    <property type="entry name" value="NUCDPKINASE"/>
</dbReference>
<dbReference type="SMART" id="SM00562">
    <property type="entry name" value="NDK"/>
    <property type="match status" value="1"/>
</dbReference>
<dbReference type="SUPFAM" id="SSF54919">
    <property type="entry name" value="Nucleoside diphosphate kinase, NDK"/>
    <property type="match status" value="1"/>
</dbReference>
<dbReference type="PROSITE" id="PS00469">
    <property type="entry name" value="NDPK"/>
    <property type="match status" value="1"/>
</dbReference>
<dbReference type="PROSITE" id="PS51374">
    <property type="entry name" value="NDPK_LIKE"/>
    <property type="match status" value="1"/>
</dbReference>
<accession>Q07661</accession>
<accession>A0A0P0X6I2</accession>
<accession>Q0D6C7</accession>
<accession>Q6DQV1</accession>
<accession>Q6ZHK3</accession>
<evidence type="ECO:0000250" key="1"/>
<evidence type="ECO:0000269" key="2">
    <source>
    </source>
</evidence>
<evidence type="ECO:0000269" key="3">
    <source>
    </source>
</evidence>
<evidence type="ECO:0000305" key="4"/>
<evidence type="ECO:0007829" key="5">
    <source>
        <dbReference type="PDB" id="1PKU"/>
    </source>
</evidence>
<name>NDK1_ORYSJ</name>
<keyword id="KW-0002">3D-structure</keyword>
<keyword id="KW-0067">ATP-binding</keyword>
<keyword id="KW-0418">Kinase</keyword>
<keyword id="KW-0460">Magnesium</keyword>
<keyword id="KW-0479">Metal-binding</keyword>
<keyword id="KW-0546">Nucleotide metabolism</keyword>
<keyword id="KW-0547">Nucleotide-binding</keyword>
<keyword id="KW-0597">Phosphoprotein</keyword>
<keyword id="KW-1185">Reference proteome</keyword>
<keyword id="KW-0808">Transferase</keyword>
<comment type="function">
    <text>Major role in the synthesis of nucleoside triphosphates other than ATP. The ATP gamma phosphate is transferred to the NDP beta phosphate via a ping-pong mechanism, using a phosphorylated active-site intermediate. This NDK is microtubule-associated.</text>
</comment>
<comment type="catalytic activity">
    <reaction>
        <text>a 2'-deoxyribonucleoside 5'-diphosphate + ATP = a 2'-deoxyribonucleoside 5'-triphosphate + ADP</text>
        <dbReference type="Rhea" id="RHEA:44640"/>
        <dbReference type="ChEBI" id="CHEBI:30616"/>
        <dbReference type="ChEBI" id="CHEBI:61560"/>
        <dbReference type="ChEBI" id="CHEBI:73316"/>
        <dbReference type="ChEBI" id="CHEBI:456216"/>
        <dbReference type="EC" id="2.7.4.6"/>
    </reaction>
</comment>
<comment type="catalytic activity">
    <reaction>
        <text>a ribonucleoside 5'-diphosphate + ATP = a ribonucleoside 5'-triphosphate + ADP</text>
        <dbReference type="Rhea" id="RHEA:18113"/>
        <dbReference type="ChEBI" id="CHEBI:30616"/>
        <dbReference type="ChEBI" id="CHEBI:57930"/>
        <dbReference type="ChEBI" id="CHEBI:61557"/>
        <dbReference type="ChEBI" id="CHEBI:456216"/>
        <dbReference type="EC" id="2.7.4.6"/>
    </reaction>
</comment>
<comment type="cofactor">
    <cofactor evidence="1">
        <name>Mg(2+)</name>
        <dbReference type="ChEBI" id="CHEBI:18420"/>
    </cofactor>
</comment>
<comment type="subunit">
    <text evidence="3">Homohexamer.</text>
</comment>
<comment type="induction">
    <text evidence="2">By salicylic acid, benzo (1,2,3) thiadiazole-7-carbothioc acid S-methyl ester, jasmonic acid, and abscisic acid.</text>
</comment>
<comment type="similarity">
    <text evidence="4">Belongs to the NDK family.</text>
</comment>
<sequence>MEQSFIMIKPDGVQRGLIGDIISRFEKKGFYLRGMKFMNVERSFAQQHYADLSDKPFFPGLVEYIISGPVVAMVWEGKDVVATGRRIIGATRPWEAAPGTIRADYAVEVGRNVIHGSDSVDNGKKEIALWFPEGLAEWRSNLHPWIYES</sequence>